<dbReference type="EC" id="4.2.1.20" evidence="1"/>
<dbReference type="EMBL" id="AE017262">
    <property type="protein sequence ID" value="AAT04423.1"/>
    <property type="molecule type" value="Genomic_DNA"/>
</dbReference>
<dbReference type="RefSeq" id="WP_003726797.1">
    <property type="nucleotide sequence ID" value="NC_002973.6"/>
</dbReference>
<dbReference type="SMR" id="Q71Z41"/>
<dbReference type="KEGG" id="lmf:LMOf2365_1649"/>
<dbReference type="HOGENOM" id="CLU_016734_0_0_9"/>
<dbReference type="UniPathway" id="UPA00035">
    <property type="reaction ID" value="UER00044"/>
</dbReference>
<dbReference type="GO" id="GO:0005829">
    <property type="term" value="C:cytosol"/>
    <property type="evidence" value="ECO:0007669"/>
    <property type="project" value="TreeGrafter"/>
</dbReference>
<dbReference type="GO" id="GO:0004834">
    <property type="term" value="F:tryptophan synthase activity"/>
    <property type="evidence" value="ECO:0007669"/>
    <property type="project" value="UniProtKB-UniRule"/>
</dbReference>
<dbReference type="CDD" id="cd04724">
    <property type="entry name" value="Tryptophan_synthase_alpha"/>
    <property type="match status" value="1"/>
</dbReference>
<dbReference type="FunFam" id="3.20.20.70:FF:000238">
    <property type="entry name" value="Tryptophan synthase alpha chain"/>
    <property type="match status" value="1"/>
</dbReference>
<dbReference type="Gene3D" id="3.20.20.70">
    <property type="entry name" value="Aldolase class I"/>
    <property type="match status" value="1"/>
</dbReference>
<dbReference type="HAMAP" id="MF_00131">
    <property type="entry name" value="Trp_synth_alpha"/>
    <property type="match status" value="1"/>
</dbReference>
<dbReference type="InterPro" id="IPR013785">
    <property type="entry name" value="Aldolase_TIM"/>
</dbReference>
<dbReference type="InterPro" id="IPR011060">
    <property type="entry name" value="RibuloseP-bd_barrel"/>
</dbReference>
<dbReference type="InterPro" id="IPR018204">
    <property type="entry name" value="Trp_synthase_alpha_AS"/>
</dbReference>
<dbReference type="InterPro" id="IPR002028">
    <property type="entry name" value="Trp_synthase_suA"/>
</dbReference>
<dbReference type="NCBIfam" id="TIGR00262">
    <property type="entry name" value="trpA"/>
    <property type="match status" value="1"/>
</dbReference>
<dbReference type="PANTHER" id="PTHR43406:SF1">
    <property type="entry name" value="TRYPTOPHAN SYNTHASE ALPHA CHAIN, CHLOROPLASTIC"/>
    <property type="match status" value="1"/>
</dbReference>
<dbReference type="PANTHER" id="PTHR43406">
    <property type="entry name" value="TRYPTOPHAN SYNTHASE, ALPHA CHAIN"/>
    <property type="match status" value="1"/>
</dbReference>
<dbReference type="Pfam" id="PF00290">
    <property type="entry name" value="Trp_syntA"/>
    <property type="match status" value="1"/>
</dbReference>
<dbReference type="SUPFAM" id="SSF51366">
    <property type="entry name" value="Ribulose-phoshate binding barrel"/>
    <property type="match status" value="1"/>
</dbReference>
<dbReference type="PROSITE" id="PS00167">
    <property type="entry name" value="TRP_SYNTHASE_ALPHA"/>
    <property type="match status" value="1"/>
</dbReference>
<protein>
    <recommendedName>
        <fullName evidence="1">Tryptophan synthase alpha chain</fullName>
        <ecNumber evidence="1">4.2.1.20</ecNumber>
    </recommendedName>
</protein>
<gene>
    <name evidence="1" type="primary">trpA</name>
    <name type="ordered locus">LMOf2365_1649</name>
</gene>
<comment type="function">
    <text evidence="1">The alpha subunit is responsible for the aldol cleavage of indoleglycerol phosphate to indole and glyceraldehyde 3-phosphate.</text>
</comment>
<comment type="catalytic activity">
    <reaction evidence="1">
        <text>(1S,2R)-1-C-(indol-3-yl)glycerol 3-phosphate + L-serine = D-glyceraldehyde 3-phosphate + L-tryptophan + H2O</text>
        <dbReference type="Rhea" id="RHEA:10532"/>
        <dbReference type="ChEBI" id="CHEBI:15377"/>
        <dbReference type="ChEBI" id="CHEBI:33384"/>
        <dbReference type="ChEBI" id="CHEBI:57912"/>
        <dbReference type="ChEBI" id="CHEBI:58866"/>
        <dbReference type="ChEBI" id="CHEBI:59776"/>
        <dbReference type="EC" id="4.2.1.20"/>
    </reaction>
</comment>
<comment type="pathway">
    <text evidence="1">Amino-acid biosynthesis; L-tryptophan biosynthesis; L-tryptophan from chorismate: step 5/5.</text>
</comment>
<comment type="subunit">
    <text evidence="1">Tetramer of two alpha and two beta chains.</text>
</comment>
<comment type="similarity">
    <text evidence="1">Belongs to the TrpA family.</text>
</comment>
<organism>
    <name type="scientific">Listeria monocytogenes serotype 4b (strain F2365)</name>
    <dbReference type="NCBI Taxonomy" id="265669"/>
    <lineage>
        <taxon>Bacteria</taxon>
        <taxon>Bacillati</taxon>
        <taxon>Bacillota</taxon>
        <taxon>Bacilli</taxon>
        <taxon>Bacillales</taxon>
        <taxon>Listeriaceae</taxon>
        <taxon>Listeria</taxon>
    </lineage>
</organism>
<proteinExistence type="inferred from homology"/>
<keyword id="KW-0028">Amino-acid biosynthesis</keyword>
<keyword id="KW-0057">Aromatic amino acid biosynthesis</keyword>
<keyword id="KW-0456">Lyase</keyword>
<keyword id="KW-0822">Tryptophan biosynthesis</keyword>
<evidence type="ECO:0000255" key="1">
    <source>
        <dbReference type="HAMAP-Rule" id="MF_00131"/>
    </source>
</evidence>
<sequence length="257" mass="27902">MTKTLTNKLAKKDHAAVVTYIMGGDGGLDNLEEQLLFLEKSGVSAIEIGIPFSDPVADGPIIQLAGLRALKEQVSLEAILNKLARSKVQIPLIIMSYINPIFHLGIPKFVELVQKTPVKGLIIPDLPYEHQTLITPELQGTDIALIPLVSLTSPKERLEEIAKQAEGFIYAVTVNGTTGVRSEFDAHIDNHLAYLKSISPVPVLAGFGVSSIEHVEKFAHVCDGVIIGSKVVQMLHEEKTAELGAFLQKAAEVRIEN</sequence>
<reference key="1">
    <citation type="journal article" date="2004" name="Nucleic Acids Res.">
        <title>Whole genome comparisons of serotype 4b and 1/2a strains of the food-borne pathogen Listeria monocytogenes reveal new insights into the core genome components of this species.</title>
        <authorList>
            <person name="Nelson K.E."/>
            <person name="Fouts D.E."/>
            <person name="Mongodin E.F."/>
            <person name="Ravel J."/>
            <person name="DeBoy R.T."/>
            <person name="Kolonay J.F."/>
            <person name="Rasko D.A."/>
            <person name="Angiuoli S.V."/>
            <person name="Gill S.R."/>
            <person name="Paulsen I.T."/>
            <person name="Peterson J.D."/>
            <person name="White O."/>
            <person name="Nelson W.C."/>
            <person name="Nierman W.C."/>
            <person name="Beanan M.J."/>
            <person name="Brinkac L.M."/>
            <person name="Daugherty S.C."/>
            <person name="Dodson R.J."/>
            <person name="Durkin A.S."/>
            <person name="Madupu R."/>
            <person name="Haft D.H."/>
            <person name="Selengut J."/>
            <person name="Van Aken S.E."/>
            <person name="Khouri H.M."/>
            <person name="Fedorova N."/>
            <person name="Forberger H.A."/>
            <person name="Tran B."/>
            <person name="Kathariou S."/>
            <person name="Wonderling L.D."/>
            <person name="Uhlich G.A."/>
            <person name="Bayles D.O."/>
            <person name="Luchansky J.B."/>
            <person name="Fraser C.M."/>
        </authorList>
    </citation>
    <scope>NUCLEOTIDE SEQUENCE [LARGE SCALE GENOMIC DNA]</scope>
    <source>
        <strain>F2365</strain>
    </source>
</reference>
<name>TRPA_LISMF</name>
<feature type="chain" id="PRO_0000098804" description="Tryptophan synthase alpha chain">
    <location>
        <begin position="1"/>
        <end position="257"/>
    </location>
</feature>
<feature type="active site" description="Proton acceptor" evidence="1">
    <location>
        <position position="47"/>
    </location>
</feature>
<feature type="active site" description="Proton acceptor" evidence="1">
    <location>
        <position position="58"/>
    </location>
</feature>
<accession>Q71Z41</accession>